<keyword id="KW-0312">Gluconeogenesis</keyword>
<keyword id="KW-0324">Glycolysis</keyword>
<keyword id="KW-0413">Isomerase</keyword>
<keyword id="KW-1185">Reference proteome</keyword>
<protein>
    <recommendedName>
        <fullName evidence="1">2,3-bisphosphoglycerate-dependent phosphoglycerate mutase</fullName>
        <shortName evidence="1">BPG-dependent PGAM</shortName>
        <shortName evidence="1">PGAM</shortName>
        <shortName evidence="1">Phosphoglyceromutase</shortName>
        <shortName evidence="1">dPGM</shortName>
        <ecNumber evidence="1">5.4.2.11</ecNumber>
    </recommendedName>
</protein>
<name>GPMA_CHLTR</name>
<sequence length="226" mass="25786">MTLLILLRHGQSVWNQKNLFTGWVDIPLSQQGIQEAIAAGESIKHLPIDCIFTSTLVRSLITALLAMTNHSSQKVPYIVHEERPDMSRIHSQKEMEQMIPLFQSSALNERMYGELQGKNKQEVAAQFGEEQVKLWRRSYRIAPPQGESLFDTGQRTLPYFQERIFPLLQQGKNIFISAHGNSLRSLIMDLEKLSEEQVLSLELPTGQPIVYEWTGQKFTKHAPSLG</sequence>
<gene>
    <name evidence="1" type="primary">gpmA</name>
    <name type="synonym">pgm</name>
    <name type="ordered locus">CT_722</name>
</gene>
<feature type="chain" id="PRO_0000179867" description="2,3-bisphosphoglycerate-dependent phosphoglycerate mutase">
    <location>
        <begin position="1"/>
        <end position="226"/>
    </location>
</feature>
<feature type="active site" description="Tele-phosphohistidine intermediate" evidence="1">
    <location>
        <position position="9"/>
    </location>
</feature>
<feature type="active site" description="Proton donor/acceptor" evidence="1">
    <location>
        <position position="109"/>
    </location>
</feature>
<feature type="binding site" evidence="1">
    <location>
        <begin position="8"/>
        <end position="15"/>
    </location>
    <ligand>
        <name>substrate</name>
    </ligand>
</feature>
<feature type="binding site" evidence="1">
    <location>
        <begin position="21"/>
        <end position="22"/>
    </location>
    <ligand>
        <name>substrate</name>
    </ligand>
</feature>
<feature type="binding site" evidence="1">
    <location>
        <position position="58"/>
    </location>
    <ligand>
        <name>substrate</name>
    </ligand>
</feature>
<feature type="binding site" evidence="1">
    <location>
        <begin position="109"/>
        <end position="112"/>
    </location>
    <ligand>
        <name>substrate</name>
    </ligand>
</feature>
<feature type="binding site" evidence="1">
    <location>
        <position position="120"/>
    </location>
    <ligand>
        <name>substrate</name>
    </ligand>
</feature>
<feature type="binding site" evidence="1">
    <location>
        <begin position="136"/>
        <end position="137"/>
    </location>
    <ligand>
        <name>substrate</name>
    </ligand>
</feature>
<feature type="binding site" evidence="1">
    <location>
        <begin position="180"/>
        <end position="181"/>
    </location>
    <ligand>
        <name>substrate</name>
    </ligand>
</feature>
<feature type="site" description="Transition state stabilizer" evidence="1">
    <location>
        <position position="179"/>
    </location>
</feature>
<reference key="1">
    <citation type="journal article" date="1998" name="Science">
        <title>Genome sequence of an obligate intracellular pathogen of humans: Chlamydia trachomatis.</title>
        <authorList>
            <person name="Stephens R.S."/>
            <person name="Kalman S."/>
            <person name="Lammel C.J."/>
            <person name="Fan J."/>
            <person name="Marathe R."/>
            <person name="Aravind L."/>
            <person name="Mitchell W.P."/>
            <person name="Olinger L."/>
            <person name="Tatusov R.L."/>
            <person name="Zhao Q."/>
            <person name="Koonin E.V."/>
            <person name="Davis R.W."/>
        </authorList>
    </citation>
    <scope>NUCLEOTIDE SEQUENCE [LARGE SCALE GENOMIC DNA]</scope>
    <source>
        <strain>ATCC VR-885 / DSM 19411 / UW-3/Cx</strain>
    </source>
</reference>
<comment type="function">
    <text evidence="1">Catalyzes the interconversion of 2-phosphoglycerate and 3-phosphoglycerate.</text>
</comment>
<comment type="catalytic activity">
    <reaction evidence="1">
        <text>(2R)-2-phosphoglycerate = (2R)-3-phosphoglycerate</text>
        <dbReference type="Rhea" id="RHEA:15901"/>
        <dbReference type="ChEBI" id="CHEBI:58272"/>
        <dbReference type="ChEBI" id="CHEBI:58289"/>
        <dbReference type="EC" id="5.4.2.11"/>
    </reaction>
</comment>
<comment type="pathway">
    <text evidence="1">Carbohydrate degradation; glycolysis; pyruvate from D-glyceraldehyde 3-phosphate: step 3/5.</text>
</comment>
<comment type="similarity">
    <text evidence="1">Belongs to the phosphoglycerate mutase family. BPG-dependent PGAM subfamily.</text>
</comment>
<dbReference type="EC" id="5.4.2.11" evidence="1"/>
<dbReference type="EMBL" id="AE001273">
    <property type="protein sequence ID" value="AAC68317.1"/>
    <property type="molecule type" value="Genomic_DNA"/>
</dbReference>
<dbReference type="PIR" id="E71478">
    <property type="entry name" value="E71478"/>
</dbReference>
<dbReference type="RefSeq" id="NP_220241.1">
    <property type="nucleotide sequence ID" value="NC_000117.1"/>
</dbReference>
<dbReference type="RefSeq" id="WP_009872098.1">
    <property type="nucleotide sequence ID" value="NC_000117.1"/>
</dbReference>
<dbReference type="SMR" id="O84727"/>
<dbReference type="FunCoup" id="O84727">
    <property type="interactions" value="185"/>
</dbReference>
<dbReference type="STRING" id="272561.CT_722"/>
<dbReference type="EnsemblBacteria" id="AAC68317">
    <property type="protein sequence ID" value="AAC68317"/>
    <property type="gene ID" value="CT_722"/>
</dbReference>
<dbReference type="GeneID" id="884513"/>
<dbReference type="KEGG" id="ctr:CT_722"/>
<dbReference type="PATRIC" id="fig|272561.5.peg.795"/>
<dbReference type="HOGENOM" id="CLU_033323_1_4_0"/>
<dbReference type="InParanoid" id="O84727"/>
<dbReference type="OrthoDB" id="9781415at2"/>
<dbReference type="UniPathway" id="UPA00109">
    <property type="reaction ID" value="UER00186"/>
</dbReference>
<dbReference type="Proteomes" id="UP000000431">
    <property type="component" value="Chromosome"/>
</dbReference>
<dbReference type="GO" id="GO:0004619">
    <property type="term" value="F:phosphoglycerate mutase activity"/>
    <property type="evidence" value="ECO:0007669"/>
    <property type="project" value="UniProtKB-EC"/>
</dbReference>
<dbReference type="GO" id="GO:0006094">
    <property type="term" value="P:gluconeogenesis"/>
    <property type="evidence" value="ECO:0007669"/>
    <property type="project" value="UniProtKB-UniRule"/>
</dbReference>
<dbReference type="GO" id="GO:0006096">
    <property type="term" value="P:glycolytic process"/>
    <property type="evidence" value="ECO:0007669"/>
    <property type="project" value="UniProtKB-UniRule"/>
</dbReference>
<dbReference type="CDD" id="cd07067">
    <property type="entry name" value="HP_PGM_like"/>
    <property type="match status" value="1"/>
</dbReference>
<dbReference type="Gene3D" id="3.40.50.1240">
    <property type="entry name" value="Phosphoglycerate mutase-like"/>
    <property type="match status" value="1"/>
</dbReference>
<dbReference type="HAMAP" id="MF_01039">
    <property type="entry name" value="PGAM_GpmA"/>
    <property type="match status" value="1"/>
</dbReference>
<dbReference type="InterPro" id="IPR013078">
    <property type="entry name" value="His_Pase_superF_clade-1"/>
</dbReference>
<dbReference type="InterPro" id="IPR029033">
    <property type="entry name" value="His_PPase_superfam"/>
</dbReference>
<dbReference type="InterPro" id="IPR001345">
    <property type="entry name" value="PG/BPGM_mutase_AS"/>
</dbReference>
<dbReference type="InterPro" id="IPR005952">
    <property type="entry name" value="Phosphogly_mut1"/>
</dbReference>
<dbReference type="NCBIfam" id="NF002217">
    <property type="entry name" value="PRK01112.1"/>
    <property type="match status" value="1"/>
</dbReference>
<dbReference type="PANTHER" id="PTHR11931">
    <property type="entry name" value="PHOSPHOGLYCERATE MUTASE"/>
    <property type="match status" value="1"/>
</dbReference>
<dbReference type="Pfam" id="PF00300">
    <property type="entry name" value="His_Phos_1"/>
    <property type="match status" value="2"/>
</dbReference>
<dbReference type="PIRSF" id="PIRSF000709">
    <property type="entry name" value="6PFK_2-Ptase"/>
    <property type="match status" value="1"/>
</dbReference>
<dbReference type="SMART" id="SM00855">
    <property type="entry name" value="PGAM"/>
    <property type="match status" value="1"/>
</dbReference>
<dbReference type="SUPFAM" id="SSF53254">
    <property type="entry name" value="Phosphoglycerate mutase-like"/>
    <property type="match status" value="1"/>
</dbReference>
<dbReference type="PROSITE" id="PS00175">
    <property type="entry name" value="PG_MUTASE"/>
    <property type="match status" value="1"/>
</dbReference>
<organism>
    <name type="scientific">Chlamydia trachomatis serovar D (strain ATCC VR-885 / DSM 19411 / UW-3/Cx)</name>
    <dbReference type="NCBI Taxonomy" id="272561"/>
    <lineage>
        <taxon>Bacteria</taxon>
        <taxon>Pseudomonadati</taxon>
        <taxon>Chlamydiota</taxon>
        <taxon>Chlamydiia</taxon>
        <taxon>Chlamydiales</taxon>
        <taxon>Chlamydiaceae</taxon>
        <taxon>Chlamydia/Chlamydophila group</taxon>
        <taxon>Chlamydia</taxon>
    </lineage>
</organism>
<accession>O84727</accession>
<evidence type="ECO:0000255" key="1">
    <source>
        <dbReference type="HAMAP-Rule" id="MF_01039"/>
    </source>
</evidence>
<proteinExistence type="inferred from homology"/>